<feature type="chain" id="PRO_0000140448" description="Probable 2-isopropylmalate synthase">
    <location>
        <begin position="1"/>
        <end position="565"/>
    </location>
</feature>
<feature type="domain" description="Pyruvate carboxyltransferase" evidence="3">
    <location>
        <begin position="33"/>
        <end position="306"/>
    </location>
</feature>
<feature type="region of interest" description="Disordered" evidence="4">
    <location>
        <begin position="1"/>
        <end position="21"/>
    </location>
</feature>
<feature type="compositionally biased region" description="Low complexity" evidence="4">
    <location>
        <begin position="1"/>
        <end position="15"/>
    </location>
</feature>
<feature type="binding site" evidence="1">
    <location>
        <position position="42"/>
    </location>
    <ligand>
        <name>a divalent metal cation</name>
        <dbReference type="ChEBI" id="CHEBI:60240"/>
    </ligand>
</feature>
<feature type="binding site" evidence="1">
    <location>
        <position position="239"/>
    </location>
    <ligand>
        <name>a divalent metal cation</name>
        <dbReference type="ChEBI" id="CHEBI:60240"/>
    </ligand>
</feature>
<feature type="binding site" evidence="1">
    <location>
        <position position="241"/>
    </location>
    <ligand>
        <name>a divalent metal cation</name>
        <dbReference type="ChEBI" id="CHEBI:60240"/>
    </ligand>
</feature>
<feature type="binding site" evidence="1">
    <location>
        <position position="275"/>
    </location>
    <ligand>
        <name>a divalent metal cation</name>
        <dbReference type="ChEBI" id="CHEBI:60240"/>
    </ligand>
</feature>
<evidence type="ECO:0000250" key="1">
    <source>
        <dbReference type="UniProtKB" id="Q9JZG1"/>
    </source>
</evidence>
<evidence type="ECO:0000250" key="2">
    <source>
        <dbReference type="UniProtKB" id="Q9LPR4"/>
    </source>
</evidence>
<evidence type="ECO:0000255" key="3">
    <source>
        <dbReference type="PROSITE-ProRule" id="PRU01151"/>
    </source>
</evidence>
<evidence type="ECO:0000256" key="4">
    <source>
        <dbReference type="SAM" id="MobiDB-lite"/>
    </source>
</evidence>
<evidence type="ECO:0000269" key="5">
    <source>
    </source>
</evidence>
<evidence type="ECO:0000305" key="6"/>
<evidence type="ECO:0000305" key="7">
    <source>
    </source>
</evidence>
<reference key="1">
    <citation type="journal article" date="1995" name="Mol. Plant Microbe Interact.">
        <title>GmN56, a novel nodule-specific cDNA from soybean root nodules encodes a protein homologous to isopropylmalate synthase and homocitrate synthase.</title>
        <authorList>
            <person name="Kouchi H."/>
            <person name="Hata S."/>
        </authorList>
    </citation>
    <scope>NUCLEOTIDE SEQUENCE [MRNA]</scope>
    <scope>TISSUE SPECIFICITY</scope>
    <scope>INDUCTION</scope>
    <source>
        <strain>cv. Akisengoku</strain>
        <tissue>Root nodule</tissue>
    </source>
</reference>
<proteinExistence type="evidence at transcript level"/>
<gene>
    <name type="primary">GMN56</name>
</gene>
<name>LEU1_SOYBN</name>
<protein>
    <recommendedName>
        <fullName>Probable 2-isopropylmalate synthase</fullName>
        <ecNumber>2.3.3.13</ecNumber>
    </recommendedName>
    <alternativeName>
        <fullName>Alpha-IPM synthase</fullName>
    </alternativeName>
    <alternativeName>
        <fullName>Alpha-isopropylmalate synthase</fullName>
    </alternativeName>
    <alternativeName>
        <fullName>Late nodulin-56</fullName>
        <shortName>N-56</shortName>
    </alternativeName>
</protein>
<accession>Q39891</accession>
<comment type="function">
    <text evidence="2 7">Catalyzes the condensation of the acetyl group of acetyl-CoA with 3-methyl-2-oxobutanoate (2-oxoisovalerate) to form 3-carboxy-3-hydroxy-4-methylpentanoate (2-isopropylmalate) (By similarity). May play an important role in symbiotic nitrogen fixation (Probable).</text>
</comment>
<comment type="catalytic activity">
    <reaction evidence="2">
        <text>3-methyl-2-oxobutanoate + acetyl-CoA + H2O = (2S)-2-isopropylmalate + CoA + H(+)</text>
        <dbReference type="Rhea" id="RHEA:21524"/>
        <dbReference type="ChEBI" id="CHEBI:1178"/>
        <dbReference type="ChEBI" id="CHEBI:11851"/>
        <dbReference type="ChEBI" id="CHEBI:15377"/>
        <dbReference type="ChEBI" id="CHEBI:15378"/>
        <dbReference type="ChEBI" id="CHEBI:57287"/>
        <dbReference type="ChEBI" id="CHEBI:57288"/>
        <dbReference type="EC" id="2.3.3.13"/>
    </reaction>
</comment>
<comment type="cofactor">
    <cofactor evidence="1">
        <name>a divalent metal cation</name>
        <dbReference type="ChEBI" id="CHEBI:60240"/>
    </cofactor>
</comment>
<comment type="subunit">
    <text evidence="2">Homodimer.</text>
</comment>
<comment type="tissue specificity">
    <text evidence="5">Exclusively expressed in mature nodules.</text>
</comment>
<comment type="induction">
    <text evidence="5">At the same time as leghemoglobin; after completion of nodule organogenesis and just before the onset of nitrogen-fixation activity.</text>
</comment>
<comment type="similarity">
    <text evidence="6">Belongs to the alpha-IPM synthase/homocitrate synthase family. LeuA type 1 subfamily.</text>
</comment>
<keyword id="KW-0028">Amino-acid biosynthesis</keyword>
<keyword id="KW-0100">Branched-chain amino acid biosynthesis</keyword>
<keyword id="KW-0432">Leucine biosynthesis</keyword>
<keyword id="KW-0479">Metal-binding</keyword>
<keyword id="KW-0535">Nitrogen fixation</keyword>
<keyword id="KW-0536">Nodulation</keyword>
<keyword id="KW-1185">Reference proteome</keyword>
<keyword id="KW-0808">Transferase</keyword>
<sequence>MPTKTSTPSSQSPKLSHLRPQYIPNHIPDSSYVRILDTTLRDGEQSPGATMTAKEKLDIARQLVKLGVDIIQPGFPSASNSDFMAVKMIAQEVGNAVDDDGYVPVIAGFCRCVEKDISTAWEAVKYAKRPRLCTSIATSPIHMEHKLRKSKDQVIQIARDMVKFARSLGCNDIQFGAEDATRSDREFLYEILGVVIEAGATTVNIADTVGIVMPLELGKLIVDIKDNTPGIANVIISTHCHNDLGLATANTIEGARTGARQLEVTINGIGERAGNASLEEVVMALASKGDHALNGLYTRINTRHILETSKMVEEYSGMHLQPHKPLVGANAFVHASGIHQDGMLKHKGTYETISPEEIGHKRTTRIGIVLGKLSGSQALRKRLEELGYDLKEDEVDSVFWQFKAMAEKKKVVTDVDLKALVSYKAFHAESIWKLGDLQVTCGTIGLSTATVKLVNIDGSTHVACSIGIGAVDSTYKAINLIVKEPTKLLDYSLNSVTEGIGVNVTARVVICRENNHTSTYAFTEDANYPTFSGIAAEMDVVVSTVKAYLVALNKLLRWKESFRCA</sequence>
<dbReference type="EC" id="2.3.3.13"/>
<dbReference type="EMBL" id="D38015">
    <property type="protein sequence ID" value="BAA07212.1"/>
    <property type="molecule type" value="mRNA"/>
</dbReference>
<dbReference type="PIR" id="T08590">
    <property type="entry name" value="T08590"/>
</dbReference>
<dbReference type="RefSeq" id="NP_001237749.1">
    <property type="nucleotide sequence ID" value="NM_001250820.1"/>
</dbReference>
<dbReference type="SMR" id="Q39891"/>
<dbReference type="STRING" id="3847.Q39891"/>
<dbReference type="PaxDb" id="3847-GLYMA13G12484.1"/>
<dbReference type="GeneID" id="547778"/>
<dbReference type="KEGG" id="gmx:547778"/>
<dbReference type="eggNOG" id="KOG2367">
    <property type="taxonomic scope" value="Eukaryota"/>
</dbReference>
<dbReference type="InParanoid" id="Q39891"/>
<dbReference type="OrthoDB" id="2015253at2759"/>
<dbReference type="Proteomes" id="UP000008827">
    <property type="component" value="Unplaced"/>
</dbReference>
<dbReference type="GO" id="GO:0009507">
    <property type="term" value="C:chloroplast"/>
    <property type="evidence" value="ECO:0000318"/>
    <property type="project" value="GO_Central"/>
</dbReference>
<dbReference type="GO" id="GO:0003852">
    <property type="term" value="F:2-isopropylmalate synthase activity"/>
    <property type="evidence" value="ECO:0000318"/>
    <property type="project" value="GO_Central"/>
</dbReference>
<dbReference type="GO" id="GO:0046872">
    <property type="term" value="F:metal ion binding"/>
    <property type="evidence" value="ECO:0007669"/>
    <property type="project" value="UniProtKB-KW"/>
</dbReference>
<dbReference type="GO" id="GO:0009098">
    <property type="term" value="P:L-leucine biosynthetic process"/>
    <property type="evidence" value="ECO:0000318"/>
    <property type="project" value="GO_Central"/>
</dbReference>
<dbReference type="GO" id="GO:0009877">
    <property type="term" value="P:nodulation"/>
    <property type="evidence" value="ECO:0007669"/>
    <property type="project" value="UniProtKB-KW"/>
</dbReference>
<dbReference type="CDD" id="cd07940">
    <property type="entry name" value="DRE_TIM_IPMS"/>
    <property type="match status" value="1"/>
</dbReference>
<dbReference type="FunFam" id="1.10.238.260:FF:000001">
    <property type="entry name" value="2-isopropylmalate synthase"/>
    <property type="match status" value="1"/>
</dbReference>
<dbReference type="FunFam" id="3.20.20.70:FF:000010">
    <property type="entry name" value="2-isopropylmalate synthase"/>
    <property type="match status" value="1"/>
</dbReference>
<dbReference type="FunFam" id="3.30.160.270:FF:000004">
    <property type="entry name" value="2-isopropylmalate synthase B"/>
    <property type="match status" value="1"/>
</dbReference>
<dbReference type="Gene3D" id="1.10.238.260">
    <property type="match status" value="1"/>
</dbReference>
<dbReference type="Gene3D" id="3.30.160.270">
    <property type="match status" value="1"/>
</dbReference>
<dbReference type="Gene3D" id="3.20.20.70">
    <property type="entry name" value="Aldolase class I"/>
    <property type="match status" value="1"/>
</dbReference>
<dbReference type="InterPro" id="IPR050073">
    <property type="entry name" value="2-IPM_HCS-like"/>
</dbReference>
<dbReference type="InterPro" id="IPR013709">
    <property type="entry name" value="2-isopropylmalate_synth_dimer"/>
</dbReference>
<dbReference type="InterPro" id="IPR002034">
    <property type="entry name" value="AIPM/Hcit_synth_CS"/>
</dbReference>
<dbReference type="InterPro" id="IPR013785">
    <property type="entry name" value="Aldolase_TIM"/>
</dbReference>
<dbReference type="InterPro" id="IPR054691">
    <property type="entry name" value="LeuA/HCS_post-cat"/>
</dbReference>
<dbReference type="InterPro" id="IPR036230">
    <property type="entry name" value="LeuA_allosteric_dom_sf"/>
</dbReference>
<dbReference type="InterPro" id="IPR000891">
    <property type="entry name" value="PYR_CT"/>
</dbReference>
<dbReference type="NCBIfam" id="NF002086">
    <property type="entry name" value="PRK00915.1-3"/>
    <property type="match status" value="1"/>
</dbReference>
<dbReference type="PANTHER" id="PTHR10277:SF74">
    <property type="entry name" value="2-ISOPROPYLMALATE SYNTHASE-RELATED"/>
    <property type="match status" value="1"/>
</dbReference>
<dbReference type="PANTHER" id="PTHR10277">
    <property type="entry name" value="HOMOCITRATE SYNTHASE-RELATED"/>
    <property type="match status" value="1"/>
</dbReference>
<dbReference type="Pfam" id="PF22617">
    <property type="entry name" value="HCS_D2"/>
    <property type="match status" value="1"/>
</dbReference>
<dbReference type="Pfam" id="PF00682">
    <property type="entry name" value="HMGL-like"/>
    <property type="match status" value="1"/>
</dbReference>
<dbReference type="Pfam" id="PF08502">
    <property type="entry name" value="LeuA_dimer"/>
    <property type="match status" value="1"/>
</dbReference>
<dbReference type="SMART" id="SM00917">
    <property type="entry name" value="LeuA_dimer"/>
    <property type="match status" value="1"/>
</dbReference>
<dbReference type="SUPFAM" id="SSF110921">
    <property type="entry name" value="2-isopropylmalate synthase LeuA, allosteric (dimerisation) domain"/>
    <property type="match status" value="1"/>
</dbReference>
<dbReference type="SUPFAM" id="SSF51569">
    <property type="entry name" value="Aldolase"/>
    <property type="match status" value="1"/>
</dbReference>
<dbReference type="PROSITE" id="PS00815">
    <property type="entry name" value="AIPM_HOMOCIT_SYNTH_1"/>
    <property type="match status" value="1"/>
</dbReference>
<dbReference type="PROSITE" id="PS00816">
    <property type="entry name" value="AIPM_HOMOCIT_SYNTH_2"/>
    <property type="match status" value="1"/>
</dbReference>
<dbReference type="PROSITE" id="PS50991">
    <property type="entry name" value="PYR_CT"/>
    <property type="match status" value="1"/>
</dbReference>
<organism>
    <name type="scientific">Glycine max</name>
    <name type="common">Soybean</name>
    <name type="synonym">Glycine hispida</name>
    <dbReference type="NCBI Taxonomy" id="3847"/>
    <lineage>
        <taxon>Eukaryota</taxon>
        <taxon>Viridiplantae</taxon>
        <taxon>Streptophyta</taxon>
        <taxon>Embryophyta</taxon>
        <taxon>Tracheophyta</taxon>
        <taxon>Spermatophyta</taxon>
        <taxon>Magnoliopsida</taxon>
        <taxon>eudicotyledons</taxon>
        <taxon>Gunneridae</taxon>
        <taxon>Pentapetalae</taxon>
        <taxon>rosids</taxon>
        <taxon>fabids</taxon>
        <taxon>Fabales</taxon>
        <taxon>Fabaceae</taxon>
        <taxon>Papilionoideae</taxon>
        <taxon>50 kb inversion clade</taxon>
        <taxon>NPAAA clade</taxon>
        <taxon>indigoferoid/millettioid clade</taxon>
        <taxon>Phaseoleae</taxon>
        <taxon>Glycine</taxon>
        <taxon>Glycine subgen. Soja</taxon>
    </lineage>
</organism>